<accession>Q57601</accession>
<protein>
    <recommendedName>
        <fullName>Uncharacterized protein MJ0137</fullName>
    </recommendedName>
</protein>
<gene>
    <name type="ordered locus">MJ0137</name>
</gene>
<name>Y137_METJA</name>
<evidence type="ECO:0000255" key="1"/>
<evidence type="ECO:0000305" key="2"/>
<comment type="subcellular location">
    <subcellularLocation>
        <location evidence="2">Membrane</location>
        <topology evidence="2">Single-pass membrane protein</topology>
    </subcellularLocation>
</comment>
<comment type="similarity">
    <text evidence="2">To M.jannaschii MJ1495.</text>
</comment>
<keyword id="KW-0472">Membrane</keyword>
<keyword id="KW-1185">Reference proteome</keyword>
<keyword id="KW-0812">Transmembrane</keyword>
<keyword id="KW-1133">Transmembrane helix</keyword>
<reference key="1">
    <citation type="journal article" date="1996" name="Science">
        <title>Complete genome sequence of the methanogenic archaeon, Methanococcus jannaschii.</title>
        <authorList>
            <person name="Bult C.J."/>
            <person name="White O."/>
            <person name="Olsen G.J."/>
            <person name="Zhou L."/>
            <person name="Fleischmann R.D."/>
            <person name="Sutton G.G."/>
            <person name="Blake J.A."/>
            <person name="FitzGerald L.M."/>
            <person name="Clayton R.A."/>
            <person name="Gocayne J.D."/>
            <person name="Kerlavage A.R."/>
            <person name="Dougherty B.A."/>
            <person name="Tomb J.-F."/>
            <person name="Adams M.D."/>
            <person name="Reich C.I."/>
            <person name="Overbeek R."/>
            <person name="Kirkness E.F."/>
            <person name="Weinstock K.G."/>
            <person name="Merrick J.M."/>
            <person name="Glodek A."/>
            <person name="Scott J.L."/>
            <person name="Geoghagen N.S.M."/>
            <person name="Weidman J.F."/>
            <person name="Fuhrmann J.L."/>
            <person name="Nguyen D."/>
            <person name="Utterback T.R."/>
            <person name="Kelley J.M."/>
            <person name="Peterson J.D."/>
            <person name="Sadow P.W."/>
            <person name="Hanna M.C."/>
            <person name="Cotton M.D."/>
            <person name="Roberts K.M."/>
            <person name="Hurst M.A."/>
            <person name="Kaine B.P."/>
            <person name="Borodovsky M."/>
            <person name="Klenk H.-P."/>
            <person name="Fraser C.M."/>
            <person name="Smith H.O."/>
            <person name="Woese C.R."/>
            <person name="Venter J.C."/>
        </authorList>
    </citation>
    <scope>NUCLEOTIDE SEQUENCE [LARGE SCALE GENOMIC DNA]</scope>
    <source>
        <strain>ATCC 43067 / DSM 2661 / JAL-1 / JCM 10045 / NBRC 100440</strain>
    </source>
</reference>
<sequence>MWGEKMDPLSGFISSLIWWLLFFYLIMAPQIQYKQLQLARLKILRELSNKRNSTVITMIHRQESIGLFGIPVYKFITIEDSEEILRAIRAAPKDKPIDLIIHTPGGLVLAATQIAKALKAHPAETRVIVPHYAMSGGTLIALAADKIIMDENAVLGPVDPQLGQYPAPSIVKAVEQKGADKADDQTLILADIAKKAINQVQNFVYNLLKDKYGEEKAKELSKILTEGRWTHDYPITVEEAKELGLDVDTNVPEEVYTLMELYKQPVRQRGTVEFMPYPVKQENGAK</sequence>
<proteinExistence type="predicted"/>
<feature type="chain" id="PRO_0000106713" description="Uncharacterized protein MJ0137">
    <location>
        <begin position="1"/>
        <end position="286"/>
    </location>
</feature>
<feature type="transmembrane region" description="Helical" evidence="1">
    <location>
        <begin position="8"/>
        <end position="28"/>
    </location>
</feature>
<organism>
    <name type="scientific">Methanocaldococcus jannaschii (strain ATCC 43067 / DSM 2661 / JAL-1 / JCM 10045 / NBRC 100440)</name>
    <name type="common">Methanococcus jannaschii</name>
    <dbReference type="NCBI Taxonomy" id="243232"/>
    <lineage>
        <taxon>Archaea</taxon>
        <taxon>Methanobacteriati</taxon>
        <taxon>Methanobacteriota</taxon>
        <taxon>Methanomada group</taxon>
        <taxon>Methanococci</taxon>
        <taxon>Methanococcales</taxon>
        <taxon>Methanocaldococcaceae</taxon>
        <taxon>Methanocaldococcus</taxon>
    </lineage>
</organism>
<dbReference type="EMBL" id="L77117">
    <property type="protein sequence ID" value="AAB98120.1"/>
    <property type="molecule type" value="Genomic_DNA"/>
</dbReference>
<dbReference type="PIR" id="A64317">
    <property type="entry name" value="A64317"/>
</dbReference>
<dbReference type="SMR" id="Q57601"/>
<dbReference type="STRING" id="243232.MJ_0137"/>
<dbReference type="PaxDb" id="243232-MJ_0137"/>
<dbReference type="DNASU" id="1450978"/>
<dbReference type="EnsemblBacteria" id="AAB98120">
    <property type="protein sequence ID" value="AAB98120"/>
    <property type="gene ID" value="MJ_0137"/>
</dbReference>
<dbReference type="KEGG" id="mja:MJ_0137"/>
<dbReference type="eggNOG" id="arCOG01911">
    <property type="taxonomic scope" value="Archaea"/>
</dbReference>
<dbReference type="HOGENOM" id="CLU_067083_0_0_2"/>
<dbReference type="InParanoid" id="Q57601"/>
<dbReference type="PhylomeDB" id="Q57601"/>
<dbReference type="Proteomes" id="UP000000805">
    <property type="component" value="Chromosome"/>
</dbReference>
<dbReference type="GO" id="GO:0016020">
    <property type="term" value="C:membrane"/>
    <property type="evidence" value="ECO:0007669"/>
    <property type="project" value="UniProtKB-SubCell"/>
</dbReference>
<dbReference type="Gene3D" id="3.90.226.10">
    <property type="entry name" value="2-enoyl-CoA Hydratase, Chain A, domain 1"/>
    <property type="match status" value="1"/>
</dbReference>
<dbReference type="InterPro" id="IPR029045">
    <property type="entry name" value="ClpP/crotonase-like_dom_sf"/>
</dbReference>
<dbReference type="InterPro" id="IPR002825">
    <property type="entry name" value="Pept_S49_ser-pept_pro"/>
</dbReference>
<dbReference type="NCBIfam" id="NF047768">
    <property type="entry name" value="Clp_like_SDH"/>
    <property type="match status" value="1"/>
</dbReference>
<dbReference type="PANTHER" id="PTHR35984">
    <property type="entry name" value="PERIPLASMIC SERINE PROTEASE"/>
    <property type="match status" value="1"/>
</dbReference>
<dbReference type="PANTHER" id="PTHR35984:SF4">
    <property type="entry name" value="PERIPLASMIC SERINE PROTEASE"/>
    <property type="match status" value="1"/>
</dbReference>
<dbReference type="Pfam" id="PF01972">
    <property type="entry name" value="SDH_protease"/>
    <property type="match status" value="1"/>
</dbReference>
<dbReference type="SUPFAM" id="SSF52096">
    <property type="entry name" value="ClpP/crotonase"/>
    <property type="match status" value="1"/>
</dbReference>